<proteinExistence type="inferred from homology"/>
<sequence length="397" mass="42410">MIRYLTSGESHGPALSAIVEGVPAGVGITPEMINTELARRQQGYGRGGRMKIETDQAEVLSGIRFGKTIGSPITLIIRNRDWENWTTTMSQFSEPAEDIAKITIPRPGHADLTGKIKYGLNDIRPVIERSSARETTARVAAGTISRIFLKAIGIEIGSYISAIGSAGETTADTQIEKLLRSGAETLARKADRSAVRMLDKKKEAEAIIAIDAAKDAGDTLGGIIEIFITGVPMGLGSYMQHDRRLDANLAAALISIQAIKGVEIGTAFANALKPGSQVHDEFIIEPEKGLTRSSNRAGGIEGSMSSGQTIHLRAAMKPISSLLTPLHSFDSETLQPTLSRFERSDTCAVPAAGVVAEAMVSTVIANAVLEKFGGDHLGEIQTRISLHRDLTRKAFIA</sequence>
<evidence type="ECO:0000255" key="1">
    <source>
        <dbReference type="HAMAP-Rule" id="MF_00300"/>
    </source>
</evidence>
<evidence type="ECO:0000305" key="2"/>
<protein>
    <recommendedName>
        <fullName evidence="1">Chorismate synthase</fullName>
        <shortName evidence="1">CS</shortName>
        <ecNumber evidence="1">4.2.3.5</ecNumber>
    </recommendedName>
    <alternativeName>
        <fullName evidence="1">5-enolpyruvylshikimate-3-phosphate phospholyase</fullName>
    </alternativeName>
</protein>
<gene>
    <name evidence="1" type="primary">aroC</name>
    <name type="ordered locus">Cpha266_1805</name>
</gene>
<name>AROC_CHLPD</name>
<keyword id="KW-0028">Amino-acid biosynthesis</keyword>
<keyword id="KW-0057">Aromatic amino acid biosynthesis</keyword>
<keyword id="KW-0274">FAD</keyword>
<keyword id="KW-0285">Flavoprotein</keyword>
<keyword id="KW-0288">FMN</keyword>
<keyword id="KW-0456">Lyase</keyword>
<keyword id="KW-0521">NADP</keyword>
<keyword id="KW-1185">Reference proteome</keyword>
<feature type="chain" id="PRO_0000322396" description="Chorismate synthase">
    <location>
        <begin position="1"/>
        <end position="397"/>
    </location>
</feature>
<feature type="binding site" evidence="1">
    <location>
        <position position="40"/>
    </location>
    <ligand>
        <name>NADP(+)</name>
        <dbReference type="ChEBI" id="CHEBI:58349"/>
    </ligand>
</feature>
<feature type="binding site" evidence="1">
    <location>
        <position position="46"/>
    </location>
    <ligand>
        <name>NADP(+)</name>
        <dbReference type="ChEBI" id="CHEBI:58349"/>
    </ligand>
</feature>
<feature type="binding site" evidence="1">
    <location>
        <begin position="129"/>
        <end position="131"/>
    </location>
    <ligand>
        <name>FMN</name>
        <dbReference type="ChEBI" id="CHEBI:58210"/>
    </ligand>
</feature>
<feature type="binding site" evidence="1">
    <location>
        <begin position="257"/>
        <end position="258"/>
    </location>
    <ligand>
        <name>FMN</name>
        <dbReference type="ChEBI" id="CHEBI:58210"/>
    </ligand>
</feature>
<feature type="binding site" evidence="1">
    <location>
        <position position="302"/>
    </location>
    <ligand>
        <name>FMN</name>
        <dbReference type="ChEBI" id="CHEBI:58210"/>
    </ligand>
</feature>
<feature type="binding site" evidence="1">
    <location>
        <begin position="317"/>
        <end position="321"/>
    </location>
    <ligand>
        <name>FMN</name>
        <dbReference type="ChEBI" id="CHEBI:58210"/>
    </ligand>
</feature>
<feature type="binding site" evidence="1">
    <location>
        <position position="343"/>
    </location>
    <ligand>
        <name>FMN</name>
        <dbReference type="ChEBI" id="CHEBI:58210"/>
    </ligand>
</feature>
<comment type="function">
    <text evidence="1">Catalyzes the anti-1,4-elimination of the C-3 phosphate and the C-6 proR hydrogen from 5-enolpyruvylshikimate-3-phosphate (EPSP) to yield chorismate, which is the branch point compound that serves as the starting substrate for the three terminal pathways of aromatic amino acid biosynthesis. This reaction introduces a second double bond into the aromatic ring system.</text>
</comment>
<comment type="catalytic activity">
    <reaction evidence="1">
        <text>5-O-(1-carboxyvinyl)-3-phosphoshikimate = chorismate + phosphate</text>
        <dbReference type="Rhea" id="RHEA:21020"/>
        <dbReference type="ChEBI" id="CHEBI:29748"/>
        <dbReference type="ChEBI" id="CHEBI:43474"/>
        <dbReference type="ChEBI" id="CHEBI:57701"/>
        <dbReference type="EC" id="4.2.3.5"/>
    </reaction>
</comment>
<comment type="cofactor">
    <cofactor evidence="1">
        <name>FMNH2</name>
        <dbReference type="ChEBI" id="CHEBI:57618"/>
    </cofactor>
    <text evidence="1">Reduced FMN (FMNH(2)).</text>
</comment>
<comment type="pathway">
    <text evidence="1">Metabolic intermediate biosynthesis; chorismate biosynthesis; chorismate from D-erythrose 4-phosphate and phosphoenolpyruvate: step 7/7.</text>
</comment>
<comment type="subunit">
    <text evidence="1">Homotetramer.</text>
</comment>
<comment type="similarity">
    <text evidence="1">Belongs to the chorismate synthase family.</text>
</comment>
<comment type="sequence caution" evidence="2">
    <conflict type="erroneous initiation">
        <sequence resource="EMBL-CDS" id="ABL65822"/>
    </conflict>
    <text>Extended N-terminus.</text>
</comment>
<reference key="1">
    <citation type="submission" date="2006-12" db="EMBL/GenBank/DDBJ databases">
        <title>Complete sequence of Chlorobium phaeobacteroides DSM 266.</title>
        <authorList>
            <consortium name="US DOE Joint Genome Institute"/>
            <person name="Copeland A."/>
            <person name="Lucas S."/>
            <person name="Lapidus A."/>
            <person name="Barry K."/>
            <person name="Detter J.C."/>
            <person name="Glavina del Rio T."/>
            <person name="Hammon N."/>
            <person name="Israni S."/>
            <person name="Pitluck S."/>
            <person name="Goltsman E."/>
            <person name="Schmutz J."/>
            <person name="Larimer F."/>
            <person name="Land M."/>
            <person name="Hauser L."/>
            <person name="Mikhailova N."/>
            <person name="Li T."/>
            <person name="Overmann J."/>
            <person name="Bryant D.A."/>
            <person name="Richardson P."/>
        </authorList>
    </citation>
    <scope>NUCLEOTIDE SEQUENCE [LARGE SCALE GENOMIC DNA]</scope>
    <source>
        <strain>DSM 266 / SMG 266 / 2430</strain>
    </source>
</reference>
<dbReference type="EC" id="4.2.3.5" evidence="1"/>
<dbReference type="EMBL" id="CP000492">
    <property type="protein sequence ID" value="ABL65822.1"/>
    <property type="status" value="ALT_INIT"/>
    <property type="molecule type" value="Genomic_DNA"/>
</dbReference>
<dbReference type="RefSeq" id="WP_041467312.1">
    <property type="nucleotide sequence ID" value="NC_008639.1"/>
</dbReference>
<dbReference type="SMR" id="A1BHE5"/>
<dbReference type="STRING" id="290317.Cpha266_1805"/>
<dbReference type="KEGG" id="cph:Cpha266_1805"/>
<dbReference type="eggNOG" id="COG0082">
    <property type="taxonomic scope" value="Bacteria"/>
</dbReference>
<dbReference type="HOGENOM" id="CLU_034547_2_0_10"/>
<dbReference type="OrthoDB" id="9771806at2"/>
<dbReference type="UniPathway" id="UPA00053">
    <property type="reaction ID" value="UER00090"/>
</dbReference>
<dbReference type="Proteomes" id="UP000008701">
    <property type="component" value="Chromosome"/>
</dbReference>
<dbReference type="GO" id="GO:0005829">
    <property type="term" value="C:cytosol"/>
    <property type="evidence" value="ECO:0007669"/>
    <property type="project" value="TreeGrafter"/>
</dbReference>
<dbReference type="GO" id="GO:0004107">
    <property type="term" value="F:chorismate synthase activity"/>
    <property type="evidence" value="ECO:0007669"/>
    <property type="project" value="UniProtKB-UniRule"/>
</dbReference>
<dbReference type="GO" id="GO:0010181">
    <property type="term" value="F:FMN binding"/>
    <property type="evidence" value="ECO:0007669"/>
    <property type="project" value="TreeGrafter"/>
</dbReference>
<dbReference type="GO" id="GO:0008652">
    <property type="term" value="P:amino acid biosynthetic process"/>
    <property type="evidence" value="ECO:0007669"/>
    <property type="project" value="UniProtKB-KW"/>
</dbReference>
<dbReference type="GO" id="GO:0009073">
    <property type="term" value="P:aromatic amino acid family biosynthetic process"/>
    <property type="evidence" value="ECO:0007669"/>
    <property type="project" value="UniProtKB-KW"/>
</dbReference>
<dbReference type="GO" id="GO:0009423">
    <property type="term" value="P:chorismate biosynthetic process"/>
    <property type="evidence" value="ECO:0007669"/>
    <property type="project" value="UniProtKB-UniRule"/>
</dbReference>
<dbReference type="CDD" id="cd07304">
    <property type="entry name" value="Chorismate_synthase"/>
    <property type="match status" value="1"/>
</dbReference>
<dbReference type="FunFam" id="3.60.150.10:FF:000002">
    <property type="entry name" value="Chorismate synthase"/>
    <property type="match status" value="1"/>
</dbReference>
<dbReference type="Gene3D" id="3.60.150.10">
    <property type="entry name" value="Chorismate synthase AroC"/>
    <property type="match status" value="1"/>
</dbReference>
<dbReference type="HAMAP" id="MF_00300">
    <property type="entry name" value="Chorismate_synth"/>
    <property type="match status" value="1"/>
</dbReference>
<dbReference type="InterPro" id="IPR000453">
    <property type="entry name" value="Chorismate_synth"/>
</dbReference>
<dbReference type="InterPro" id="IPR035904">
    <property type="entry name" value="Chorismate_synth_AroC_sf"/>
</dbReference>
<dbReference type="InterPro" id="IPR020541">
    <property type="entry name" value="Chorismate_synthase_CS"/>
</dbReference>
<dbReference type="NCBIfam" id="TIGR00033">
    <property type="entry name" value="aroC"/>
    <property type="match status" value="1"/>
</dbReference>
<dbReference type="NCBIfam" id="NF003793">
    <property type="entry name" value="PRK05382.1"/>
    <property type="match status" value="1"/>
</dbReference>
<dbReference type="PANTHER" id="PTHR21085">
    <property type="entry name" value="CHORISMATE SYNTHASE"/>
    <property type="match status" value="1"/>
</dbReference>
<dbReference type="PANTHER" id="PTHR21085:SF0">
    <property type="entry name" value="CHORISMATE SYNTHASE"/>
    <property type="match status" value="1"/>
</dbReference>
<dbReference type="Pfam" id="PF01264">
    <property type="entry name" value="Chorismate_synt"/>
    <property type="match status" value="1"/>
</dbReference>
<dbReference type="PIRSF" id="PIRSF001456">
    <property type="entry name" value="Chorismate_synth"/>
    <property type="match status" value="1"/>
</dbReference>
<dbReference type="SUPFAM" id="SSF103263">
    <property type="entry name" value="Chorismate synthase, AroC"/>
    <property type="match status" value="1"/>
</dbReference>
<dbReference type="PROSITE" id="PS00787">
    <property type="entry name" value="CHORISMATE_SYNTHASE_1"/>
    <property type="match status" value="1"/>
</dbReference>
<dbReference type="PROSITE" id="PS00788">
    <property type="entry name" value="CHORISMATE_SYNTHASE_2"/>
    <property type="match status" value="1"/>
</dbReference>
<organism>
    <name type="scientific">Chlorobium phaeobacteroides (strain DSM 266 / SMG 266 / 2430)</name>
    <dbReference type="NCBI Taxonomy" id="290317"/>
    <lineage>
        <taxon>Bacteria</taxon>
        <taxon>Pseudomonadati</taxon>
        <taxon>Chlorobiota</taxon>
        <taxon>Chlorobiia</taxon>
        <taxon>Chlorobiales</taxon>
        <taxon>Chlorobiaceae</taxon>
        <taxon>Chlorobium/Pelodictyon group</taxon>
        <taxon>Chlorobium</taxon>
    </lineage>
</organism>
<accession>A1BHE5</accession>